<gene>
    <name evidence="1" type="primary">groEL</name>
    <name evidence="1" type="synonym">groL</name>
    <name type="ordered locus">Minf_2176</name>
</gene>
<proteinExistence type="inferred from homology"/>
<accession>B3DZP5</accession>
<feature type="chain" id="PRO_1000130036" description="Chaperonin GroEL">
    <location>
        <begin position="1"/>
        <end position="544"/>
    </location>
</feature>
<feature type="region of interest" description="Disordered" evidence="2">
    <location>
        <begin position="524"/>
        <end position="544"/>
    </location>
</feature>
<feature type="compositionally biased region" description="Gly residues" evidence="2">
    <location>
        <begin position="535"/>
        <end position="544"/>
    </location>
</feature>
<feature type="binding site" evidence="1">
    <location>
        <begin position="30"/>
        <end position="33"/>
    </location>
    <ligand>
        <name>ATP</name>
        <dbReference type="ChEBI" id="CHEBI:30616"/>
    </ligand>
</feature>
<feature type="binding site" evidence="1">
    <location>
        <position position="51"/>
    </location>
    <ligand>
        <name>ATP</name>
        <dbReference type="ChEBI" id="CHEBI:30616"/>
    </ligand>
</feature>
<feature type="binding site" evidence="1">
    <location>
        <begin position="87"/>
        <end position="91"/>
    </location>
    <ligand>
        <name>ATP</name>
        <dbReference type="ChEBI" id="CHEBI:30616"/>
    </ligand>
</feature>
<feature type="binding site" evidence="1">
    <location>
        <position position="415"/>
    </location>
    <ligand>
        <name>ATP</name>
        <dbReference type="ChEBI" id="CHEBI:30616"/>
    </ligand>
</feature>
<feature type="binding site" evidence="1">
    <location>
        <begin position="478"/>
        <end position="480"/>
    </location>
    <ligand>
        <name>ATP</name>
        <dbReference type="ChEBI" id="CHEBI:30616"/>
    </ligand>
</feature>
<feature type="binding site" evidence="1">
    <location>
        <position position="494"/>
    </location>
    <ligand>
        <name>ATP</name>
        <dbReference type="ChEBI" id="CHEBI:30616"/>
    </ligand>
</feature>
<dbReference type="EC" id="5.6.1.7" evidence="1"/>
<dbReference type="EMBL" id="CP000975">
    <property type="protein sequence ID" value="ACD84230.1"/>
    <property type="molecule type" value="Genomic_DNA"/>
</dbReference>
<dbReference type="RefSeq" id="WP_012464512.1">
    <property type="nucleotide sequence ID" value="NC_010794.1"/>
</dbReference>
<dbReference type="SMR" id="B3DZP5"/>
<dbReference type="STRING" id="481448.Minf_2176"/>
<dbReference type="KEGG" id="min:Minf_2176"/>
<dbReference type="eggNOG" id="COG0459">
    <property type="taxonomic scope" value="Bacteria"/>
</dbReference>
<dbReference type="HOGENOM" id="CLU_016503_3_0_0"/>
<dbReference type="OrthoDB" id="9766614at2"/>
<dbReference type="Proteomes" id="UP000009149">
    <property type="component" value="Chromosome"/>
</dbReference>
<dbReference type="GO" id="GO:0005737">
    <property type="term" value="C:cytoplasm"/>
    <property type="evidence" value="ECO:0007669"/>
    <property type="project" value="UniProtKB-SubCell"/>
</dbReference>
<dbReference type="GO" id="GO:0005524">
    <property type="term" value="F:ATP binding"/>
    <property type="evidence" value="ECO:0007669"/>
    <property type="project" value="UniProtKB-UniRule"/>
</dbReference>
<dbReference type="GO" id="GO:0140662">
    <property type="term" value="F:ATP-dependent protein folding chaperone"/>
    <property type="evidence" value="ECO:0007669"/>
    <property type="project" value="InterPro"/>
</dbReference>
<dbReference type="GO" id="GO:0016853">
    <property type="term" value="F:isomerase activity"/>
    <property type="evidence" value="ECO:0007669"/>
    <property type="project" value="UniProtKB-KW"/>
</dbReference>
<dbReference type="GO" id="GO:0051082">
    <property type="term" value="F:unfolded protein binding"/>
    <property type="evidence" value="ECO:0007669"/>
    <property type="project" value="UniProtKB-UniRule"/>
</dbReference>
<dbReference type="GO" id="GO:0042026">
    <property type="term" value="P:protein refolding"/>
    <property type="evidence" value="ECO:0007669"/>
    <property type="project" value="UniProtKB-UniRule"/>
</dbReference>
<dbReference type="CDD" id="cd03344">
    <property type="entry name" value="GroEL"/>
    <property type="match status" value="1"/>
</dbReference>
<dbReference type="FunFam" id="1.10.560.10:FF:000001">
    <property type="entry name" value="60 kDa chaperonin"/>
    <property type="match status" value="1"/>
</dbReference>
<dbReference type="FunFam" id="3.50.7.10:FF:000001">
    <property type="entry name" value="60 kDa chaperonin"/>
    <property type="match status" value="1"/>
</dbReference>
<dbReference type="Gene3D" id="3.50.7.10">
    <property type="entry name" value="GroEL"/>
    <property type="match status" value="1"/>
</dbReference>
<dbReference type="Gene3D" id="1.10.560.10">
    <property type="entry name" value="GroEL-like equatorial domain"/>
    <property type="match status" value="1"/>
</dbReference>
<dbReference type="Gene3D" id="3.30.260.10">
    <property type="entry name" value="TCP-1-like chaperonin intermediate domain"/>
    <property type="match status" value="1"/>
</dbReference>
<dbReference type="HAMAP" id="MF_00600">
    <property type="entry name" value="CH60"/>
    <property type="match status" value="1"/>
</dbReference>
<dbReference type="InterPro" id="IPR018370">
    <property type="entry name" value="Chaperonin_Cpn60_CS"/>
</dbReference>
<dbReference type="InterPro" id="IPR001844">
    <property type="entry name" value="Cpn60/GroEL"/>
</dbReference>
<dbReference type="InterPro" id="IPR002423">
    <property type="entry name" value="Cpn60/GroEL/TCP-1"/>
</dbReference>
<dbReference type="InterPro" id="IPR027409">
    <property type="entry name" value="GroEL-like_apical_dom_sf"/>
</dbReference>
<dbReference type="InterPro" id="IPR027413">
    <property type="entry name" value="GROEL-like_equatorial_sf"/>
</dbReference>
<dbReference type="InterPro" id="IPR027410">
    <property type="entry name" value="TCP-1-like_intermed_sf"/>
</dbReference>
<dbReference type="NCBIfam" id="TIGR02348">
    <property type="entry name" value="GroEL"/>
    <property type="match status" value="1"/>
</dbReference>
<dbReference type="NCBIfam" id="NF000592">
    <property type="entry name" value="PRK00013.1"/>
    <property type="match status" value="1"/>
</dbReference>
<dbReference type="NCBIfam" id="NF009487">
    <property type="entry name" value="PRK12849.1"/>
    <property type="match status" value="1"/>
</dbReference>
<dbReference type="NCBIfam" id="NF009488">
    <property type="entry name" value="PRK12850.1"/>
    <property type="match status" value="1"/>
</dbReference>
<dbReference type="NCBIfam" id="NF009489">
    <property type="entry name" value="PRK12851.1"/>
    <property type="match status" value="1"/>
</dbReference>
<dbReference type="PANTHER" id="PTHR45633">
    <property type="entry name" value="60 KDA HEAT SHOCK PROTEIN, MITOCHONDRIAL"/>
    <property type="match status" value="1"/>
</dbReference>
<dbReference type="Pfam" id="PF00118">
    <property type="entry name" value="Cpn60_TCP1"/>
    <property type="match status" value="1"/>
</dbReference>
<dbReference type="PRINTS" id="PR00298">
    <property type="entry name" value="CHAPERONIN60"/>
</dbReference>
<dbReference type="SUPFAM" id="SSF52029">
    <property type="entry name" value="GroEL apical domain-like"/>
    <property type="match status" value="1"/>
</dbReference>
<dbReference type="SUPFAM" id="SSF48592">
    <property type="entry name" value="GroEL equatorial domain-like"/>
    <property type="match status" value="1"/>
</dbReference>
<dbReference type="SUPFAM" id="SSF54849">
    <property type="entry name" value="GroEL-intermediate domain like"/>
    <property type="match status" value="1"/>
</dbReference>
<dbReference type="PROSITE" id="PS00296">
    <property type="entry name" value="CHAPERONINS_CPN60"/>
    <property type="match status" value="1"/>
</dbReference>
<reference key="1">
    <citation type="journal article" date="2008" name="Biol. Direct">
        <title>Complete genome sequence of the extremely acidophilic methanotroph isolate V4, Methylacidiphilum infernorum, a representative of the bacterial phylum Verrucomicrobia.</title>
        <authorList>
            <person name="Hou S."/>
            <person name="Makarova K.S."/>
            <person name="Saw J.H."/>
            <person name="Senin P."/>
            <person name="Ly B.V."/>
            <person name="Zhou Z."/>
            <person name="Ren Y."/>
            <person name="Wang J."/>
            <person name="Galperin M.Y."/>
            <person name="Omelchenko M.V."/>
            <person name="Wolf Y.I."/>
            <person name="Yutin N."/>
            <person name="Koonin E.V."/>
            <person name="Stott M.B."/>
            <person name="Mountain B.W."/>
            <person name="Crowe M.A."/>
            <person name="Smirnova A.V."/>
            <person name="Dunfield P.F."/>
            <person name="Feng L."/>
            <person name="Wang L."/>
            <person name="Alam M."/>
        </authorList>
    </citation>
    <scope>NUCLEOTIDE SEQUENCE [LARGE SCALE GENOMIC DNA]</scope>
    <source>
        <strain>Isolate V4</strain>
    </source>
</reference>
<keyword id="KW-0067">ATP-binding</keyword>
<keyword id="KW-0143">Chaperone</keyword>
<keyword id="KW-0963">Cytoplasm</keyword>
<keyword id="KW-0413">Isomerase</keyword>
<keyword id="KW-0547">Nucleotide-binding</keyword>
<name>CH60_METI4</name>
<comment type="function">
    <text evidence="1">Together with its co-chaperonin GroES, plays an essential role in assisting protein folding. The GroEL-GroES system forms a nano-cage that allows encapsulation of the non-native substrate proteins and provides a physical environment optimized to promote and accelerate protein folding.</text>
</comment>
<comment type="catalytic activity">
    <reaction evidence="1">
        <text>ATP + H2O + a folded polypeptide = ADP + phosphate + an unfolded polypeptide.</text>
        <dbReference type="EC" id="5.6.1.7"/>
    </reaction>
</comment>
<comment type="subunit">
    <text evidence="1">Forms a cylinder of 14 subunits composed of two heptameric rings stacked back-to-back. Interacts with the co-chaperonin GroES.</text>
</comment>
<comment type="subcellular location">
    <subcellularLocation>
        <location evidence="1">Cytoplasm</location>
    </subcellularLocation>
</comment>
<comment type="similarity">
    <text evidence="1">Belongs to the chaperonin (HSP60) family.</text>
</comment>
<evidence type="ECO:0000255" key="1">
    <source>
        <dbReference type="HAMAP-Rule" id="MF_00600"/>
    </source>
</evidence>
<evidence type="ECO:0000256" key="2">
    <source>
        <dbReference type="SAM" id="MobiDB-lite"/>
    </source>
</evidence>
<sequence length="544" mass="58479">MAAKQLIFDESARHALLRGVEKLSKAVKCTLGPAGRNVILDKKFGSPTITKDGVTVAKEVELEDPWENMGAQLVKEVASKTSDVAGDGTTTATVLAESIYKEGLKNVTAGANPMDLKRGVDKAVQAVVKQLKEISHIVKGKEEIKQVATVSANWDTSIGEIIADALDKVGKDGTVTVEEAKHIETTLEVVEGMQFDRGYISPYFVTNAEELEAVLENAYILIHEKKISNLKDLLPLLEKIAKAGRPLLIIAEDVEGEALATLVVNKLRGTLQVCAVKAPGFGDRRKAMLEDIAILTGGRCLTEDLGIKLENVQLEDLGRAKRIIVEKENTTIIEGSGSRSEIQGRINQIRRQIEETTSDYDREKLQERLAKLAGGVAVIHVGAATETELKEKKARVEDALHATRAAVEEGIVPGGGVALLRCQKAIEGLSLKGDEQIGANIVYKALEYPLKTLADNAGLEGSVIVNEVKAKKGNEGFDVAKRSYVDMFEAGIVDPTKVTRTALENAASIAGLLLTTEAMVTEIPEKEKKPATPAGAGGMGDMEY</sequence>
<organism>
    <name type="scientific">Methylacidiphilum infernorum (isolate V4)</name>
    <name type="common">Methylokorus infernorum (strain V4)</name>
    <dbReference type="NCBI Taxonomy" id="481448"/>
    <lineage>
        <taxon>Bacteria</taxon>
        <taxon>Pseudomonadati</taxon>
        <taxon>Verrucomicrobiota</taxon>
        <taxon>Methylacidiphilae</taxon>
        <taxon>Methylacidiphilales</taxon>
        <taxon>Methylacidiphilaceae</taxon>
        <taxon>Methylacidiphilum (ex Ratnadevi et al. 2023)</taxon>
    </lineage>
</organism>
<protein>
    <recommendedName>
        <fullName evidence="1">Chaperonin GroEL</fullName>
        <ecNumber evidence="1">5.6.1.7</ecNumber>
    </recommendedName>
    <alternativeName>
        <fullName evidence="1">60 kDa chaperonin</fullName>
    </alternativeName>
    <alternativeName>
        <fullName evidence="1">Chaperonin-60</fullName>
        <shortName evidence="1">Cpn60</shortName>
    </alternativeName>
</protein>